<sequence length="273" mass="30737">MEANMPKRKEPGRSLRIKVISMGNAEVGKSCIIKRYCEKRFVSKYLATIGIDYGVTKVHVRDREIKVNIFDMAGHPFFYEVRNEFYKDTQGVILVYDVGQKDSFDALDAWLAEMKQELGPHGNMENIIFVVCANKIDCTKHRCVDESEGRLWAESKGFLYFETSAQTGEGINEMFQTFYISIVDLCENGGKRPTTNSSASFTKEQADAIRRIRNSKGSWDMLGVKPGASRDEVNKACRKLAVLLHPDKCVAPGSEDAFKAVVNARTALLKNIK</sequence>
<evidence type="ECO:0000250" key="1"/>
<evidence type="ECO:0000250" key="2">
    <source>
        <dbReference type="UniProtKB" id="Q8CFP6"/>
    </source>
</evidence>
<evidence type="ECO:0000255" key="3">
    <source>
        <dbReference type="PROSITE-ProRule" id="PRU00286"/>
    </source>
</evidence>
<evidence type="ECO:0000305" key="4"/>
<accession>Q5RDE5</accession>
<protein>
    <recommendedName>
        <fullName>DnaJ homolog subfamily C member 27</fullName>
    </recommendedName>
    <alternativeName>
        <fullName>Rab and DnaJ domain-containing protein</fullName>
    </alternativeName>
</protein>
<keyword id="KW-0342">GTP-binding</keyword>
<keyword id="KW-0547">Nucleotide-binding</keyword>
<keyword id="KW-0539">Nucleus</keyword>
<keyword id="KW-1185">Reference proteome</keyword>
<gene>
    <name type="primary">DNAJC27</name>
    <name type="synonym">RBJ</name>
</gene>
<organism>
    <name type="scientific">Pongo abelii</name>
    <name type="common">Sumatran orangutan</name>
    <name type="synonym">Pongo pygmaeus abelii</name>
    <dbReference type="NCBI Taxonomy" id="9601"/>
    <lineage>
        <taxon>Eukaryota</taxon>
        <taxon>Metazoa</taxon>
        <taxon>Chordata</taxon>
        <taxon>Craniata</taxon>
        <taxon>Vertebrata</taxon>
        <taxon>Euteleostomi</taxon>
        <taxon>Mammalia</taxon>
        <taxon>Eutheria</taxon>
        <taxon>Euarchontoglires</taxon>
        <taxon>Primates</taxon>
        <taxon>Haplorrhini</taxon>
        <taxon>Catarrhini</taxon>
        <taxon>Hominidae</taxon>
        <taxon>Pongo</taxon>
    </lineage>
</organism>
<proteinExistence type="evidence at transcript level"/>
<reference key="1">
    <citation type="submission" date="2004-11" db="EMBL/GenBank/DDBJ databases">
        <authorList>
            <consortium name="The German cDNA consortium"/>
        </authorList>
    </citation>
    <scope>NUCLEOTIDE SEQUENCE [LARGE SCALE MRNA]</scope>
    <source>
        <tissue>Kidney</tissue>
    </source>
</reference>
<feature type="chain" id="PRO_0000332977" description="DnaJ homolog subfamily C member 27">
    <location>
        <begin position="1"/>
        <end position="273"/>
    </location>
</feature>
<feature type="domain" description="J" evidence="3">
    <location>
        <begin position="217"/>
        <end position="273"/>
    </location>
</feature>
<feature type="region of interest" description="Required for interaction with MAPK1" evidence="2">
    <location>
        <begin position="1"/>
        <end position="18"/>
    </location>
</feature>
<feature type="binding site" evidence="1">
    <location>
        <begin position="23"/>
        <end position="30"/>
    </location>
    <ligand>
        <name>GTP</name>
        <dbReference type="ChEBI" id="CHEBI:37565"/>
    </ligand>
</feature>
<feature type="binding site" evidence="1">
    <location>
        <begin position="71"/>
        <end position="75"/>
    </location>
    <ligand>
        <name>GTP</name>
        <dbReference type="ChEBI" id="CHEBI:37565"/>
    </ligand>
</feature>
<feature type="binding site" evidence="1">
    <location>
        <begin position="134"/>
        <end position="137"/>
    </location>
    <ligand>
        <name>GTP</name>
        <dbReference type="ChEBI" id="CHEBI:37565"/>
    </ligand>
</feature>
<comment type="function">
    <text evidence="2">GTPase which can activate the MEK/ERK pathway and induce cell transformation when overexpressed. May act as a nuclear scaffold for MAPK1, probably by association with MAPK1 nuclear export signal leading to enhanced ERK1/ERK2 signaling.</text>
</comment>
<comment type="subunit">
    <text evidence="2">Interacts directly with MAPK1 (wild-type and kinase-deficient forms). Interacts directly (in GTP-bound form) with MAP2K1 (wild-type and kinase-deficient forms).</text>
</comment>
<comment type="subcellular location">
    <subcellularLocation>
        <location evidence="2">Nucleus</location>
    </subcellularLocation>
</comment>
<comment type="similarity">
    <text evidence="4">Belongs to the small GTPase superfamily. Rab family.</text>
</comment>
<name>DJC27_PONAB</name>
<dbReference type="EMBL" id="CR857967">
    <property type="protein sequence ID" value="CAH90212.1"/>
    <property type="molecule type" value="mRNA"/>
</dbReference>
<dbReference type="RefSeq" id="NP_001125081.1">
    <property type="nucleotide sequence ID" value="NM_001131609.1"/>
</dbReference>
<dbReference type="SMR" id="Q5RDE5"/>
<dbReference type="STRING" id="9601.ENSPPYP00000014064"/>
<dbReference type="GeneID" id="100171963"/>
<dbReference type="KEGG" id="pon:100171963"/>
<dbReference type="CTD" id="51277"/>
<dbReference type="eggNOG" id="KOG0098">
    <property type="taxonomic scope" value="Eukaryota"/>
</dbReference>
<dbReference type="InParanoid" id="Q5RDE5"/>
<dbReference type="OrthoDB" id="8830751at2759"/>
<dbReference type="Proteomes" id="UP000001595">
    <property type="component" value="Unplaced"/>
</dbReference>
<dbReference type="GO" id="GO:0005770">
    <property type="term" value="C:late endosome"/>
    <property type="evidence" value="ECO:0007669"/>
    <property type="project" value="TreeGrafter"/>
</dbReference>
<dbReference type="GO" id="GO:0005764">
    <property type="term" value="C:lysosome"/>
    <property type="evidence" value="ECO:0007669"/>
    <property type="project" value="TreeGrafter"/>
</dbReference>
<dbReference type="GO" id="GO:0005634">
    <property type="term" value="C:nucleus"/>
    <property type="evidence" value="ECO:0007669"/>
    <property type="project" value="UniProtKB-SubCell"/>
</dbReference>
<dbReference type="GO" id="GO:0045335">
    <property type="term" value="C:phagocytic vesicle"/>
    <property type="evidence" value="ECO:0007669"/>
    <property type="project" value="TreeGrafter"/>
</dbReference>
<dbReference type="GO" id="GO:0005525">
    <property type="term" value="F:GTP binding"/>
    <property type="evidence" value="ECO:0007669"/>
    <property type="project" value="UniProtKB-KW"/>
</dbReference>
<dbReference type="GO" id="GO:0003924">
    <property type="term" value="F:GTPase activity"/>
    <property type="evidence" value="ECO:0007669"/>
    <property type="project" value="InterPro"/>
</dbReference>
<dbReference type="GO" id="GO:0090385">
    <property type="term" value="P:phagosome-lysosome fusion"/>
    <property type="evidence" value="ECO:0007669"/>
    <property type="project" value="TreeGrafter"/>
</dbReference>
<dbReference type="CDD" id="cd06257">
    <property type="entry name" value="DnaJ"/>
    <property type="match status" value="1"/>
</dbReference>
<dbReference type="CDD" id="cd04119">
    <property type="entry name" value="RJL"/>
    <property type="match status" value="1"/>
</dbReference>
<dbReference type="FunFam" id="3.40.50.300:FF:000697">
    <property type="entry name" value="DnaJ homolog subfamily C member 27"/>
    <property type="match status" value="1"/>
</dbReference>
<dbReference type="FunFam" id="1.10.287.110:FF:000019">
    <property type="entry name" value="dnaJ homolog subfamily C member 27"/>
    <property type="match status" value="1"/>
</dbReference>
<dbReference type="Gene3D" id="1.10.287.110">
    <property type="entry name" value="DnaJ domain"/>
    <property type="match status" value="1"/>
</dbReference>
<dbReference type="Gene3D" id="3.40.50.300">
    <property type="entry name" value="P-loop containing nucleotide triphosphate hydrolases"/>
    <property type="match status" value="1"/>
</dbReference>
<dbReference type="InterPro" id="IPR001623">
    <property type="entry name" value="DnaJ_domain"/>
</dbReference>
<dbReference type="InterPro" id="IPR036869">
    <property type="entry name" value="J_dom_sf"/>
</dbReference>
<dbReference type="InterPro" id="IPR027417">
    <property type="entry name" value="P-loop_NTPase"/>
</dbReference>
<dbReference type="InterPro" id="IPR005225">
    <property type="entry name" value="Small_GTP-bd"/>
</dbReference>
<dbReference type="InterPro" id="IPR001806">
    <property type="entry name" value="Small_GTPase"/>
</dbReference>
<dbReference type="NCBIfam" id="TIGR00231">
    <property type="entry name" value="small_GTP"/>
    <property type="match status" value="1"/>
</dbReference>
<dbReference type="PANTHER" id="PTHR47981">
    <property type="entry name" value="RAB FAMILY"/>
    <property type="match status" value="1"/>
</dbReference>
<dbReference type="PANTHER" id="PTHR47981:SF20">
    <property type="entry name" value="RAS-RELATED PROTEIN RAB-7A"/>
    <property type="match status" value="1"/>
</dbReference>
<dbReference type="Pfam" id="PF00226">
    <property type="entry name" value="DnaJ"/>
    <property type="match status" value="1"/>
</dbReference>
<dbReference type="Pfam" id="PF00071">
    <property type="entry name" value="Ras"/>
    <property type="match status" value="1"/>
</dbReference>
<dbReference type="PRINTS" id="PR00625">
    <property type="entry name" value="JDOMAIN"/>
</dbReference>
<dbReference type="PRINTS" id="PR00449">
    <property type="entry name" value="RASTRNSFRMNG"/>
</dbReference>
<dbReference type="SMART" id="SM00271">
    <property type="entry name" value="DnaJ"/>
    <property type="match status" value="1"/>
</dbReference>
<dbReference type="SMART" id="SM00175">
    <property type="entry name" value="RAB"/>
    <property type="match status" value="1"/>
</dbReference>
<dbReference type="SMART" id="SM00176">
    <property type="entry name" value="RAN"/>
    <property type="match status" value="1"/>
</dbReference>
<dbReference type="SMART" id="SM00173">
    <property type="entry name" value="RAS"/>
    <property type="match status" value="1"/>
</dbReference>
<dbReference type="SMART" id="SM00174">
    <property type="entry name" value="RHO"/>
    <property type="match status" value="1"/>
</dbReference>
<dbReference type="SUPFAM" id="SSF46565">
    <property type="entry name" value="Chaperone J-domain"/>
    <property type="match status" value="1"/>
</dbReference>
<dbReference type="SUPFAM" id="SSF52540">
    <property type="entry name" value="P-loop containing nucleoside triphosphate hydrolases"/>
    <property type="match status" value="1"/>
</dbReference>
<dbReference type="PROSITE" id="PS50076">
    <property type="entry name" value="DNAJ_2"/>
    <property type="match status" value="1"/>
</dbReference>
<dbReference type="PROSITE" id="PS51419">
    <property type="entry name" value="RAB"/>
    <property type="match status" value="1"/>
</dbReference>